<organism>
    <name type="scientific">Methanospirillum hungatei JF-1 (strain ATCC 27890 / DSM 864 / NBRC 100397 / JF-1)</name>
    <dbReference type="NCBI Taxonomy" id="323259"/>
    <lineage>
        <taxon>Archaea</taxon>
        <taxon>Methanobacteriati</taxon>
        <taxon>Methanobacteriota</taxon>
        <taxon>Stenosarchaea group</taxon>
        <taxon>Methanomicrobia</taxon>
        <taxon>Methanomicrobiales</taxon>
        <taxon>Methanospirillaceae</taxon>
        <taxon>Methanospirillum</taxon>
    </lineage>
</organism>
<feature type="chain" id="PRO_0000237424" description="Glutamate--tRNA ligase">
    <location>
        <begin position="1"/>
        <end position="561"/>
    </location>
</feature>
<feature type="short sequence motif" description="'HIGH' region" evidence="1">
    <location>
        <begin position="107"/>
        <end position="117"/>
    </location>
</feature>
<accession>Q2FTH6</accession>
<dbReference type="EC" id="6.1.1.17" evidence="1"/>
<dbReference type="EMBL" id="CP000254">
    <property type="protein sequence ID" value="ABD42577.1"/>
    <property type="molecule type" value="Genomic_DNA"/>
</dbReference>
<dbReference type="RefSeq" id="WP_011449830.1">
    <property type="nucleotide sequence ID" value="NC_007796.1"/>
</dbReference>
<dbReference type="SMR" id="Q2FTH6"/>
<dbReference type="FunCoup" id="Q2FTH6">
    <property type="interactions" value="293"/>
</dbReference>
<dbReference type="STRING" id="323259.Mhun_2885"/>
<dbReference type="EnsemblBacteria" id="ABD42577">
    <property type="protein sequence ID" value="ABD42577"/>
    <property type="gene ID" value="Mhun_2885"/>
</dbReference>
<dbReference type="GeneID" id="3924180"/>
<dbReference type="KEGG" id="mhu:Mhun_2885"/>
<dbReference type="eggNOG" id="arCOG04302">
    <property type="taxonomic scope" value="Archaea"/>
</dbReference>
<dbReference type="HOGENOM" id="CLU_001882_1_3_2"/>
<dbReference type="InParanoid" id="Q2FTH6"/>
<dbReference type="OrthoDB" id="10470at2157"/>
<dbReference type="Proteomes" id="UP000001941">
    <property type="component" value="Chromosome"/>
</dbReference>
<dbReference type="GO" id="GO:0005829">
    <property type="term" value="C:cytosol"/>
    <property type="evidence" value="ECO:0007669"/>
    <property type="project" value="TreeGrafter"/>
</dbReference>
<dbReference type="GO" id="GO:0032991">
    <property type="term" value="C:protein-containing complex"/>
    <property type="evidence" value="ECO:0007669"/>
    <property type="project" value="UniProtKB-ARBA"/>
</dbReference>
<dbReference type="GO" id="GO:0005524">
    <property type="term" value="F:ATP binding"/>
    <property type="evidence" value="ECO:0007669"/>
    <property type="project" value="UniProtKB-UniRule"/>
</dbReference>
<dbReference type="GO" id="GO:0004818">
    <property type="term" value="F:glutamate-tRNA ligase activity"/>
    <property type="evidence" value="ECO:0007669"/>
    <property type="project" value="UniProtKB-UniRule"/>
</dbReference>
<dbReference type="GO" id="GO:0043604">
    <property type="term" value="P:amide biosynthetic process"/>
    <property type="evidence" value="ECO:0007669"/>
    <property type="project" value="TreeGrafter"/>
</dbReference>
<dbReference type="GO" id="GO:0006424">
    <property type="term" value="P:glutamyl-tRNA aminoacylation"/>
    <property type="evidence" value="ECO:0007669"/>
    <property type="project" value="UniProtKB-UniRule"/>
</dbReference>
<dbReference type="Gene3D" id="2.40.240.100">
    <property type="match status" value="1"/>
</dbReference>
<dbReference type="Gene3D" id="3.40.50.620">
    <property type="entry name" value="HUPs"/>
    <property type="match status" value="1"/>
</dbReference>
<dbReference type="Gene3D" id="2.40.240.10">
    <property type="entry name" value="Ribosomal Protein L25, Chain P"/>
    <property type="match status" value="1"/>
</dbReference>
<dbReference type="HAMAP" id="MF_02076">
    <property type="entry name" value="Glu_tRNA_synth_type2"/>
    <property type="match status" value="1"/>
</dbReference>
<dbReference type="InterPro" id="IPR001412">
    <property type="entry name" value="aa-tRNA-synth_I_CS"/>
</dbReference>
<dbReference type="InterPro" id="IPR050132">
    <property type="entry name" value="Gln/Glu-tRNA_Ligase"/>
</dbReference>
<dbReference type="InterPro" id="IPR004526">
    <property type="entry name" value="Glu-tRNA-synth_arc/euk"/>
</dbReference>
<dbReference type="InterPro" id="IPR000924">
    <property type="entry name" value="Glu/Gln-tRNA-synth"/>
</dbReference>
<dbReference type="InterPro" id="IPR020058">
    <property type="entry name" value="Glu/Gln-tRNA-synth_Ib_cat-dom"/>
</dbReference>
<dbReference type="InterPro" id="IPR020059">
    <property type="entry name" value="Glu/Gln-tRNA-synth_Ib_codon-bd"/>
</dbReference>
<dbReference type="InterPro" id="IPR020056">
    <property type="entry name" value="Rbsml_bL25/Gln-tRNA_synth_N"/>
</dbReference>
<dbReference type="InterPro" id="IPR011035">
    <property type="entry name" value="Ribosomal_bL25/Gln-tRNA_synth"/>
</dbReference>
<dbReference type="InterPro" id="IPR014729">
    <property type="entry name" value="Rossmann-like_a/b/a_fold"/>
</dbReference>
<dbReference type="InterPro" id="IPR049437">
    <property type="entry name" value="tRNA-synt_1c_C2"/>
</dbReference>
<dbReference type="NCBIfam" id="TIGR00463">
    <property type="entry name" value="gltX_arch"/>
    <property type="match status" value="1"/>
</dbReference>
<dbReference type="NCBIfam" id="NF003169">
    <property type="entry name" value="PRK04156.1"/>
    <property type="match status" value="1"/>
</dbReference>
<dbReference type="PANTHER" id="PTHR43097:SF5">
    <property type="entry name" value="GLUTAMATE--TRNA LIGASE"/>
    <property type="match status" value="1"/>
</dbReference>
<dbReference type="PANTHER" id="PTHR43097">
    <property type="entry name" value="GLUTAMINE-TRNA LIGASE"/>
    <property type="match status" value="1"/>
</dbReference>
<dbReference type="Pfam" id="PF00749">
    <property type="entry name" value="tRNA-synt_1c"/>
    <property type="match status" value="1"/>
</dbReference>
<dbReference type="Pfam" id="PF03950">
    <property type="entry name" value="tRNA-synt_1c_C"/>
    <property type="match status" value="1"/>
</dbReference>
<dbReference type="Pfam" id="PF20974">
    <property type="entry name" value="tRNA-synt_1c_C2"/>
    <property type="match status" value="1"/>
</dbReference>
<dbReference type="PRINTS" id="PR00987">
    <property type="entry name" value="TRNASYNTHGLU"/>
</dbReference>
<dbReference type="SUPFAM" id="SSF52374">
    <property type="entry name" value="Nucleotidylyl transferase"/>
    <property type="match status" value="1"/>
</dbReference>
<dbReference type="SUPFAM" id="SSF50715">
    <property type="entry name" value="Ribosomal protein L25-like"/>
    <property type="match status" value="1"/>
</dbReference>
<dbReference type="PROSITE" id="PS00178">
    <property type="entry name" value="AA_TRNA_LIGASE_I"/>
    <property type="match status" value="1"/>
</dbReference>
<keyword id="KW-0030">Aminoacyl-tRNA synthetase</keyword>
<keyword id="KW-0067">ATP-binding</keyword>
<keyword id="KW-0963">Cytoplasm</keyword>
<keyword id="KW-0436">Ligase</keyword>
<keyword id="KW-0547">Nucleotide-binding</keyword>
<keyword id="KW-0648">Protein biosynthesis</keyword>
<keyword id="KW-1185">Reference proteome</keyword>
<comment type="function">
    <text evidence="1">Catalyzes the attachment of glutamate to tRNA(Glu) in a two-step reaction: glutamate is first activated by ATP to form Glu-AMP and then transferred to the acceptor end of tRNA(Glu).</text>
</comment>
<comment type="catalytic activity">
    <reaction evidence="1">
        <text>tRNA(Glu) + L-glutamate + ATP = L-glutamyl-tRNA(Glu) + AMP + diphosphate</text>
        <dbReference type="Rhea" id="RHEA:23540"/>
        <dbReference type="Rhea" id="RHEA-COMP:9663"/>
        <dbReference type="Rhea" id="RHEA-COMP:9680"/>
        <dbReference type="ChEBI" id="CHEBI:29985"/>
        <dbReference type="ChEBI" id="CHEBI:30616"/>
        <dbReference type="ChEBI" id="CHEBI:33019"/>
        <dbReference type="ChEBI" id="CHEBI:78442"/>
        <dbReference type="ChEBI" id="CHEBI:78520"/>
        <dbReference type="ChEBI" id="CHEBI:456215"/>
        <dbReference type="EC" id="6.1.1.17"/>
    </reaction>
</comment>
<comment type="subcellular location">
    <subcellularLocation>
        <location evidence="1">Cytoplasm</location>
    </subcellularLocation>
</comment>
<comment type="similarity">
    <text evidence="1">Belongs to the class-I aminoacyl-tRNA synthetase family. Glutamate--tRNA ligase type 2 subfamily.</text>
</comment>
<protein>
    <recommendedName>
        <fullName evidence="1">Glutamate--tRNA ligase</fullName>
        <ecNumber evidence="1">6.1.1.17</ecNumber>
    </recommendedName>
    <alternativeName>
        <fullName evidence="1">Glutamyl-tRNA synthetase</fullName>
        <shortName evidence="1">GluRS</shortName>
    </alternativeName>
</protein>
<reference key="1">
    <citation type="journal article" date="2016" name="Stand. Genomic Sci.">
        <title>Complete genome sequence of Methanospirillum hungatei type strain JF1.</title>
        <authorList>
            <person name="Gunsalus R.P."/>
            <person name="Cook L.E."/>
            <person name="Crable B."/>
            <person name="Rohlin L."/>
            <person name="McDonald E."/>
            <person name="Mouttaki H."/>
            <person name="Sieber J.R."/>
            <person name="Poweleit N."/>
            <person name="Zhou H."/>
            <person name="Lapidus A.L."/>
            <person name="Daligault H.E."/>
            <person name="Land M."/>
            <person name="Gilna P."/>
            <person name="Ivanova N."/>
            <person name="Kyrpides N."/>
            <person name="Culley D.E."/>
            <person name="McInerney M.J."/>
        </authorList>
    </citation>
    <scope>NUCLEOTIDE SEQUENCE [LARGE SCALE GENOMIC DNA]</scope>
    <source>
        <strain>ATCC 27890 / DSM 864 / NBRC 100397 / JF-1</strain>
    </source>
</reference>
<evidence type="ECO:0000255" key="1">
    <source>
        <dbReference type="HAMAP-Rule" id="MF_02076"/>
    </source>
</evidence>
<gene>
    <name evidence="1" type="primary">gltX</name>
    <name type="ordered locus">Mhun_2885</name>
</gene>
<proteinExistence type="inferred from homology"/>
<sequence>MDDVRSVLLIAALSNAVKHKSVPAAGAVMGAILGTHPELRSKAGEIKGLLGSVLEEVSSLSAEDREEKLKTIAPDQYASLFEKKEKKKIGLPDLPKAEGGVVMRFAPNPSGPLHLGHARAAFLNDEYIRRYGGKYILRIEDTDPKRVDPDAYDMVREDIAWMGLSIAETIFQSDRFSKYYEVGKELIQKGHAYVCRCDNEKFKDLKMHKTACPCRSQSPEEALDLFDQMLDGAFTEGEVGVRLKTDLSHPDPAMRDYPLFRVLTSTPHQRVDAIVYPLMNLSVAVDDHLLGMTHVIRGKDHIANTKRQEFIFRYMGWETPVYRHYGRMGIEGVVLSTSQMRAGIQSGEYSGWDDVRLGTLRAMARRGIQPQAVRNAVVEIGIGETDIQFSWENLYAKNKEIIDSQADRFFFVPDPVLVPVSGSDPVVAKAMRYPGDESRGYREIPFAGSLYLPKAELESGAAYIRLKDLFNIKVLYEGDIIRGEYAGDDLQEARSKKAPIIQWLPENHANPCTLKTPDGDVSGVCEPEAVTTQDRIVQFERVGFARIDAAGNPAVAYFTHR</sequence>
<name>SYE_METHJ</name>